<accession>Q9P6J6</accession>
<keyword id="KW-0963">Cytoplasm</keyword>
<keyword id="KW-0326">Glycosidase</keyword>
<keyword id="KW-0378">Hydrolase</keyword>
<keyword id="KW-1185">Reference proteome</keyword>
<feature type="chain" id="PRO_0000363374" description="Putative beta-glucosidase">
    <location>
        <begin position="1"/>
        <end position="832"/>
    </location>
</feature>
<feature type="domain" description="PA14" evidence="2">
    <location>
        <begin position="397"/>
        <end position="556"/>
    </location>
</feature>
<feature type="active site" evidence="1">
    <location>
        <position position="225"/>
    </location>
</feature>
<gene>
    <name type="ORF">SPBC1683.04</name>
</gene>
<sequence>MMEHDVEDLINQLDISEKAMLLSGTDLWHTAAIPRLNIPSIRLSDGPNGIRGTSFFNSSPSACFPCGTALGATFDKKLLFEVGEYLAEEAKAKGVSVVLGPTVNIHRGPLNGRGFESFSEDSTLSGLAASYVILGLQSKNVQACIKHFVCNDMEDERNSVSIDVSQRALREVYLMPFQLACKYSNFKSLMTSYNKVNGEHVSQSRILLDNILRKEWEWKGTIISDWFGTYSLKKAIDAGLDLEMPGKPRFRNVNTIQHLVGSKELSESILDERAKNVLKLVKHSWQNTEAENHCELNNDSSCLREALKKFASQSIVLLKNKKKLLPLSRKGTFAVIGPNAKVCNYSGGGSANLKPYYTVSMYDGIAAKIDGVPEYALGCHNYLNLPNIANLLVNPRTGKHGYVAKFYLEPATSENRTLIDDYDLEDGVVRFYDYCNDKMKDGYFYIDIEGYLIPDEDAVYEFGISVFGTALLFIDDVLLIDNKTKQTPTNHTFEFGTIEERNSIYLKKGRKYNVRVEYGSAATYTLSTNLSPSTGGRYSIGCVKVIDPETEIDYAVRVAKSVDCVILCVGLTAEWETEGEDRKTMTLPSLSDKLVYSILQSNPNTVVVTQSGTPIEMPWISEAHTLLHIWYNGNELGNALANIIFGEQNPCGKLPITFPKKLKDNPAYLSFRSSRGHCVYGEDVFVGYKYYEAVEREVLFPFGYGLSYTTFELSNLYLKNCGERLRIDLEISNTGPMSGAEIIQVYISQIVRSVNRPVKELKEFSKVVLCPKETKLIRIELDIKYATSFYDELNEKWCSEEGEYNVLVGTSSKDIALTGKFTLPKTIHWTGL</sequence>
<evidence type="ECO:0000250" key="1"/>
<evidence type="ECO:0000255" key="2">
    <source>
        <dbReference type="PROSITE-ProRule" id="PRU01164"/>
    </source>
</evidence>
<evidence type="ECO:0000269" key="3">
    <source>
    </source>
</evidence>
<evidence type="ECO:0000305" key="4"/>
<comment type="catalytic activity">
    <reaction>
        <text>Hydrolysis of terminal, non-reducing beta-D-glucosyl residues with release of beta-D-glucose.</text>
        <dbReference type="EC" id="3.2.1.21"/>
    </reaction>
</comment>
<comment type="subcellular location">
    <subcellularLocation>
        <location evidence="3">Cytoplasm</location>
    </subcellularLocation>
</comment>
<comment type="similarity">
    <text evidence="4">Belongs to the glycosyl hydrolase 3 family.</text>
</comment>
<reference key="1">
    <citation type="journal article" date="2002" name="Nature">
        <title>The genome sequence of Schizosaccharomyces pombe.</title>
        <authorList>
            <person name="Wood V."/>
            <person name="Gwilliam R."/>
            <person name="Rajandream M.A."/>
            <person name="Lyne M.H."/>
            <person name="Lyne R."/>
            <person name="Stewart A."/>
            <person name="Sgouros J.G."/>
            <person name="Peat N."/>
            <person name="Hayles J."/>
            <person name="Baker S.G."/>
            <person name="Basham D."/>
            <person name="Bowman S."/>
            <person name="Brooks K."/>
            <person name="Brown D."/>
            <person name="Brown S."/>
            <person name="Chillingworth T."/>
            <person name="Churcher C.M."/>
            <person name="Collins M."/>
            <person name="Connor R."/>
            <person name="Cronin A."/>
            <person name="Davis P."/>
            <person name="Feltwell T."/>
            <person name="Fraser A."/>
            <person name="Gentles S."/>
            <person name="Goble A."/>
            <person name="Hamlin N."/>
            <person name="Harris D.E."/>
            <person name="Hidalgo J."/>
            <person name="Hodgson G."/>
            <person name="Holroyd S."/>
            <person name="Hornsby T."/>
            <person name="Howarth S."/>
            <person name="Huckle E.J."/>
            <person name="Hunt S."/>
            <person name="Jagels K."/>
            <person name="James K.D."/>
            <person name="Jones L."/>
            <person name="Jones M."/>
            <person name="Leather S."/>
            <person name="McDonald S."/>
            <person name="McLean J."/>
            <person name="Mooney P."/>
            <person name="Moule S."/>
            <person name="Mungall K.L."/>
            <person name="Murphy L.D."/>
            <person name="Niblett D."/>
            <person name="Odell C."/>
            <person name="Oliver K."/>
            <person name="O'Neil S."/>
            <person name="Pearson D."/>
            <person name="Quail M.A."/>
            <person name="Rabbinowitsch E."/>
            <person name="Rutherford K.M."/>
            <person name="Rutter S."/>
            <person name="Saunders D."/>
            <person name="Seeger K."/>
            <person name="Sharp S."/>
            <person name="Skelton J."/>
            <person name="Simmonds M.N."/>
            <person name="Squares R."/>
            <person name="Squares S."/>
            <person name="Stevens K."/>
            <person name="Taylor K."/>
            <person name="Taylor R.G."/>
            <person name="Tivey A."/>
            <person name="Walsh S.V."/>
            <person name="Warren T."/>
            <person name="Whitehead S."/>
            <person name="Woodward J.R."/>
            <person name="Volckaert G."/>
            <person name="Aert R."/>
            <person name="Robben J."/>
            <person name="Grymonprez B."/>
            <person name="Weltjens I."/>
            <person name="Vanstreels E."/>
            <person name="Rieger M."/>
            <person name="Schaefer M."/>
            <person name="Mueller-Auer S."/>
            <person name="Gabel C."/>
            <person name="Fuchs M."/>
            <person name="Duesterhoeft A."/>
            <person name="Fritzc C."/>
            <person name="Holzer E."/>
            <person name="Moestl D."/>
            <person name="Hilbert H."/>
            <person name="Borzym K."/>
            <person name="Langer I."/>
            <person name="Beck A."/>
            <person name="Lehrach H."/>
            <person name="Reinhardt R."/>
            <person name="Pohl T.M."/>
            <person name="Eger P."/>
            <person name="Zimmermann W."/>
            <person name="Wedler H."/>
            <person name="Wambutt R."/>
            <person name="Purnelle B."/>
            <person name="Goffeau A."/>
            <person name="Cadieu E."/>
            <person name="Dreano S."/>
            <person name="Gloux S."/>
            <person name="Lelaure V."/>
            <person name="Mottier S."/>
            <person name="Galibert F."/>
            <person name="Aves S.J."/>
            <person name="Xiang Z."/>
            <person name="Hunt C."/>
            <person name="Moore K."/>
            <person name="Hurst S.M."/>
            <person name="Lucas M."/>
            <person name="Rochet M."/>
            <person name="Gaillardin C."/>
            <person name="Tallada V.A."/>
            <person name="Garzon A."/>
            <person name="Thode G."/>
            <person name="Daga R.R."/>
            <person name="Cruzado L."/>
            <person name="Jimenez J."/>
            <person name="Sanchez M."/>
            <person name="del Rey F."/>
            <person name="Benito J."/>
            <person name="Dominguez A."/>
            <person name="Revuelta J.L."/>
            <person name="Moreno S."/>
            <person name="Armstrong J."/>
            <person name="Forsburg S.L."/>
            <person name="Cerutti L."/>
            <person name="Lowe T."/>
            <person name="McCombie W.R."/>
            <person name="Paulsen I."/>
            <person name="Potashkin J."/>
            <person name="Shpakovski G.V."/>
            <person name="Ussery D."/>
            <person name="Barrell B.G."/>
            <person name="Nurse P."/>
        </authorList>
    </citation>
    <scope>NUCLEOTIDE SEQUENCE [LARGE SCALE GENOMIC DNA]</scope>
    <source>
        <strain>972 / ATCC 24843</strain>
    </source>
</reference>
<reference key="2">
    <citation type="journal article" date="2006" name="Nat. Biotechnol.">
        <title>ORFeome cloning and global analysis of protein localization in the fission yeast Schizosaccharomyces pombe.</title>
        <authorList>
            <person name="Matsuyama A."/>
            <person name="Arai R."/>
            <person name="Yashiroda Y."/>
            <person name="Shirai A."/>
            <person name="Kamata A."/>
            <person name="Sekido S."/>
            <person name="Kobayashi Y."/>
            <person name="Hashimoto A."/>
            <person name="Hamamoto M."/>
            <person name="Hiraoka Y."/>
            <person name="Horinouchi S."/>
            <person name="Yoshida M."/>
        </authorList>
    </citation>
    <scope>SUBCELLULAR LOCATION [LARGE SCALE ANALYSIS]</scope>
</reference>
<proteinExistence type="inferred from homology"/>
<organism>
    <name type="scientific">Schizosaccharomyces pombe (strain 972 / ATCC 24843)</name>
    <name type="common">Fission yeast</name>
    <dbReference type="NCBI Taxonomy" id="284812"/>
    <lineage>
        <taxon>Eukaryota</taxon>
        <taxon>Fungi</taxon>
        <taxon>Dikarya</taxon>
        <taxon>Ascomycota</taxon>
        <taxon>Taphrinomycotina</taxon>
        <taxon>Schizosaccharomycetes</taxon>
        <taxon>Schizosaccharomycetales</taxon>
        <taxon>Schizosaccharomycetaceae</taxon>
        <taxon>Schizosaccharomyces</taxon>
    </lineage>
</organism>
<dbReference type="EC" id="3.2.1.21"/>
<dbReference type="EMBL" id="CU329671">
    <property type="protein sequence ID" value="CAB91166.1"/>
    <property type="molecule type" value="Genomic_DNA"/>
</dbReference>
<dbReference type="RefSeq" id="NP_595060.1">
    <property type="nucleotide sequence ID" value="NM_001020966.2"/>
</dbReference>
<dbReference type="SMR" id="Q9P6J6"/>
<dbReference type="BioGRID" id="276702">
    <property type="interactions" value="11"/>
</dbReference>
<dbReference type="FunCoup" id="Q9P6J6">
    <property type="interactions" value="58"/>
</dbReference>
<dbReference type="STRING" id="284812.Q9P6J6"/>
<dbReference type="CAZy" id="GH3">
    <property type="family name" value="Glycoside Hydrolase Family 3"/>
</dbReference>
<dbReference type="PaxDb" id="4896-SPBC1683.04.1"/>
<dbReference type="EnsemblFungi" id="SPBC1683.04.1">
    <property type="protein sequence ID" value="SPBC1683.04.1:pep"/>
    <property type="gene ID" value="SPBC1683.04"/>
</dbReference>
<dbReference type="KEGG" id="spo:2540167"/>
<dbReference type="PomBase" id="SPBC1683.04"/>
<dbReference type="VEuPathDB" id="FungiDB:SPBC1683.04"/>
<dbReference type="eggNOG" id="ENOG502QR4D">
    <property type="taxonomic scope" value="Eukaryota"/>
</dbReference>
<dbReference type="HOGENOM" id="CLU_004542_4_0_1"/>
<dbReference type="InParanoid" id="Q9P6J6"/>
<dbReference type="OMA" id="QLWIVPP"/>
<dbReference type="PhylomeDB" id="Q9P6J6"/>
<dbReference type="PRO" id="PR:Q9P6J6"/>
<dbReference type="Proteomes" id="UP000002485">
    <property type="component" value="Chromosome II"/>
</dbReference>
<dbReference type="GO" id="GO:0005829">
    <property type="term" value="C:cytosol"/>
    <property type="evidence" value="ECO:0007005"/>
    <property type="project" value="PomBase"/>
</dbReference>
<dbReference type="GO" id="GO:0043231">
    <property type="term" value="C:intracellular membrane-bounded organelle"/>
    <property type="evidence" value="ECO:0007669"/>
    <property type="project" value="UniProtKB-ARBA"/>
</dbReference>
<dbReference type="GO" id="GO:0008422">
    <property type="term" value="F:beta-glucosidase activity"/>
    <property type="evidence" value="ECO:0000318"/>
    <property type="project" value="GO_Central"/>
</dbReference>
<dbReference type="GO" id="GO:0009251">
    <property type="term" value="P:glucan catabolic process"/>
    <property type="evidence" value="ECO:0000318"/>
    <property type="project" value="GO_Central"/>
</dbReference>
<dbReference type="FunFam" id="3.20.20.300:FF:000006">
    <property type="entry name" value="Beta-glucosidase H"/>
    <property type="match status" value="1"/>
</dbReference>
<dbReference type="FunFam" id="2.60.40.10:FF:000495">
    <property type="entry name" value="Periplasmic beta-glucosidase"/>
    <property type="match status" value="1"/>
</dbReference>
<dbReference type="Gene3D" id="2.60.120.260">
    <property type="entry name" value="Galactose-binding domain-like"/>
    <property type="match status" value="1"/>
</dbReference>
<dbReference type="Gene3D" id="3.40.50.1700">
    <property type="entry name" value="Glycoside hydrolase family 3 C-terminal domain"/>
    <property type="match status" value="1"/>
</dbReference>
<dbReference type="Gene3D" id="3.20.20.300">
    <property type="entry name" value="Glycoside hydrolase, family 3, N-terminal domain"/>
    <property type="match status" value="1"/>
</dbReference>
<dbReference type="Gene3D" id="2.60.40.10">
    <property type="entry name" value="Immunoglobulins"/>
    <property type="match status" value="1"/>
</dbReference>
<dbReference type="InterPro" id="IPR050288">
    <property type="entry name" value="Cellulose_deg_GH3"/>
</dbReference>
<dbReference type="InterPro" id="IPR026891">
    <property type="entry name" value="Fn3-like"/>
</dbReference>
<dbReference type="InterPro" id="IPR019800">
    <property type="entry name" value="Glyco_hydro_3_AS"/>
</dbReference>
<dbReference type="InterPro" id="IPR002772">
    <property type="entry name" value="Glyco_hydro_3_C"/>
</dbReference>
<dbReference type="InterPro" id="IPR036881">
    <property type="entry name" value="Glyco_hydro_3_C_sf"/>
</dbReference>
<dbReference type="InterPro" id="IPR001764">
    <property type="entry name" value="Glyco_hydro_3_N"/>
</dbReference>
<dbReference type="InterPro" id="IPR036962">
    <property type="entry name" value="Glyco_hydro_3_N_sf"/>
</dbReference>
<dbReference type="InterPro" id="IPR017853">
    <property type="entry name" value="Glycoside_hydrolase_SF"/>
</dbReference>
<dbReference type="InterPro" id="IPR013783">
    <property type="entry name" value="Ig-like_fold"/>
</dbReference>
<dbReference type="InterPro" id="IPR037524">
    <property type="entry name" value="PA14/GLEYA"/>
</dbReference>
<dbReference type="InterPro" id="IPR011658">
    <property type="entry name" value="PA14_dom"/>
</dbReference>
<dbReference type="PANTHER" id="PTHR42715">
    <property type="entry name" value="BETA-GLUCOSIDASE"/>
    <property type="match status" value="1"/>
</dbReference>
<dbReference type="PANTHER" id="PTHR42715:SF27">
    <property type="entry name" value="BETA-GLUCOSIDASE-RELATED"/>
    <property type="match status" value="1"/>
</dbReference>
<dbReference type="Pfam" id="PF14310">
    <property type="entry name" value="Fn3-like"/>
    <property type="match status" value="1"/>
</dbReference>
<dbReference type="Pfam" id="PF00933">
    <property type="entry name" value="Glyco_hydro_3"/>
    <property type="match status" value="1"/>
</dbReference>
<dbReference type="Pfam" id="PF01915">
    <property type="entry name" value="Glyco_hydro_3_C"/>
    <property type="match status" value="1"/>
</dbReference>
<dbReference type="Pfam" id="PF07691">
    <property type="entry name" value="PA14"/>
    <property type="match status" value="1"/>
</dbReference>
<dbReference type="PRINTS" id="PR00133">
    <property type="entry name" value="GLHYDRLASE3"/>
</dbReference>
<dbReference type="SMART" id="SM01217">
    <property type="entry name" value="Fn3_like"/>
    <property type="match status" value="1"/>
</dbReference>
<dbReference type="SMART" id="SM00758">
    <property type="entry name" value="PA14"/>
    <property type="match status" value="1"/>
</dbReference>
<dbReference type="SUPFAM" id="SSF51445">
    <property type="entry name" value="(Trans)glycosidases"/>
    <property type="match status" value="1"/>
</dbReference>
<dbReference type="SUPFAM" id="SSF56988">
    <property type="entry name" value="Anthrax protective antigen"/>
    <property type="match status" value="1"/>
</dbReference>
<dbReference type="SUPFAM" id="SSF52279">
    <property type="entry name" value="Beta-D-glucan exohydrolase, C-terminal domain"/>
    <property type="match status" value="1"/>
</dbReference>
<dbReference type="PROSITE" id="PS00775">
    <property type="entry name" value="GLYCOSYL_HYDROL_F3"/>
    <property type="match status" value="1"/>
</dbReference>
<dbReference type="PROSITE" id="PS51820">
    <property type="entry name" value="PA14"/>
    <property type="match status" value="1"/>
</dbReference>
<name>BGLS_SCHPO</name>
<protein>
    <recommendedName>
        <fullName>Putative beta-glucosidase</fullName>
        <ecNumber>3.2.1.21</ecNumber>
    </recommendedName>
    <alternativeName>
        <fullName>Beta-D-glucoside glucohydrolase</fullName>
    </alternativeName>
    <alternativeName>
        <fullName>Cellobiase</fullName>
    </alternativeName>
    <alternativeName>
        <fullName>Gentiobiase</fullName>
    </alternativeName>
</protein>